<dbReference type="EC" id="4.2.3.5" evidence="1"/>
<dbReference type="EMBL" id="CP000377">
    <property type="protein sequence ID" value="ABF65551.1"/>
    <property type="molecule type" value="Genomic_DNA"/>
</dbReference>
<dbReference type="RefSeq" id="WP_011540133.1">
    <property type="nucleotide sequence ID" value="NC_008044.1"/>
</dbReference>
<dbReference type="SMR" id="Q1GCR5"/>
<dbReference type="STRING" id="292414.TM1040_2819"/>
<dbReference type="KEGG" id="sit:TM1040_2819"/>
<dbReference type="eggNOG" id="COG0082">
    <property type="taxonomic scope" value="Bacteria"/>
</dbReference>
<dbReference type="HOGENOM" id="CLU_034547_0_0_5"/>
<dbReference type="OrthoDB" id="9771806at2"/>
<dbReference type="UniPathway" id="UPA00053">
    <property type="reaction ID" value="UER00090"/>
</dbReference>
<dbReference type="Proteomes" id="UP000000636">
    <property type="component" value="Chromosome"/>
</dbReference>
<dbReference type="GO" id="GO:0005829">
    <property type="term" value="C:cytosol"/>
    <property type="evidence" value="ECO:0007669"/>
    <property type="project" value="TreeGrafter"/>
</dbReference>
<dbReference type="GO" id="GO:0004107">
    <property type="term" value="F:chorismate synthase activity"/>
    <property type="evidence" value="ECO:0007669"/>
    <property type="project" value="UniProtKB-UniRule"/>
</dbReference>
<dbReference type="GO" id="GO:0010181">
    <property type="term" value="F:FMN binding"/>
    <property type="evidence" value="ECO:0007669"/>
    <property type="project" value="TreeGrafter"/>
</dbReference>
<dbReference type="GO" id="GO:0008652">
    <property type="term" value="P:amino acid biosynthetic process"/>
    <property type="evidence" value="ECO:0007669"/>
    <property type="project" value="UniProtKB-KW"/>
</dbReference>
<dbReference type="GO" id="GO:0009073">
    <property type="term" value="P:aromatic amino acid family biosynthetic process"/>
    <property type="evidence" value="ECO:0007669"/>
    <property type="project" value="UniProtKB-KW"/>
</dbReference>
<dbReference type="GO" id="GO:0009423">
    <property type="term" value="P:chorismate biosynthetic process"/>
    <property type="evidence" value="ECO:0007669"/>
    <property type="project" value="UniProtKB-UniRule"/>
</dbReference>
<dbReference type="CDD" id="cd07304">
    <property type="entry name" value="Chorismate_synthase"/>
    <property type="match status" value="1"/>
</dbReference>
<dbReference type="Gene3D" id="3.60.150.10">
    <property type="entry name" value="Chorismate synthase AroC"/>
    <property type="match status" value="1"/>
</dbReference>
<dbReference type="HAMAP" id="MF_00300">
    <property type="entry name" value="Chorismate_synth"/>
    <property type="match status" value="1"/>
</dbReference>
<dbReference type="InterPro" id="IPR000453">
    <property type="entry name" value="Chorismate_synth"/>
</dbReference>
<dbReference type="InterPro" id="IPR035904">
    <property type="entry name" value="Chorismate_synth_AroC_sf"/>
</dbReference>
<dbReference type="InterPro" id="IPR020541">
    <property type="entry name" value="Chorismate_synthase_CS"/>
</dbReference>
<dbReference type="NCBIfam" id="TIGR00033">
    <property type="entry name" value="aroC"/>
    <property type="match status" value="1"/>
</dbReference>
<dbReference type="NCBIfam" id="NF003793">
    <property type="entry name" value="PRK05382.1"/>
    <property type="match status" value="1"/>
</dbReference>
<dbReference type="PANTHER" id="PTHR21085">
    <property type="entry name" value="CHORISMATE SYNTHASE"/>
    <property type="match status" value="1"/>
</dbReference>
<dbReference type="PANTHER" id="PTHR21085:SF0">
    <property type="entry name" value="CHORISMATE SYNTHASE"/>
    <property type="match status" value="1"/>
</dbReference>
<dbReference type="Pfam" id="PF01264">
    <property type="entry name" value="Chorismate_synt"/>
    <property type="match status" value="1"/>
</dbReference>
<dbReference type="PIRSF" id="PIRSF001456">
    <property type="entry name" value="Chorismate_synth"/>
    <property type="match status" value="1"/>
</dbReference>
<dbReference type="SUPFAM" id="SSF103263">
    <property type="entry name" value="Chorismate synthase, AroC"/>
    <property type="match status" value="1"/>
</dbReference>
<dbReference type="PROSITE" id="PS00787">
    <property type="entry name" value="CHORISMATE_SYNTHASE_1"/>
    <property type="match status" value="1"/>
</dbReference>
<dbReference type="PROSITE" id="PS00789">
    <property type="entry name" value="CHORISMATE_SYNTHASE_3"/>
    <property type="match status" value="1"/>
</dbReference>
<keyword id="KW-0028">Amino-acid biosynthesis</keyword>
<keyword id="KW-0057">Aromatic amino acid biosynthesis</keyword>
<keyword id="KW-0274">FAD</keyword>
<keyword id="KW-0285">Flavoprotein</keyword>
<keyword id="KW-0288">FMN</keyword>
<keyword id="KW-0456">Lyase</keyword>
<keyword id="KW-0521">NADP</keyword>
<keyword id="KW-1185">Reference proteome</keyword>
<sequence>MSMNSFGHLFRVTTWGESHGPALGATVDGCPPNVAVSEEMLQHWLDKRRPGQNKNTTQRNEPDAVRILSGVFEGKSTGTPIQLMIENTDQRSRDYGEIAQTFRPGHADITYFQKYGNRDYRGGGRSSARETAARVAAGGVAREALKSLAPGIEIKGYMTRMGEMEIDRARFDWSAIDQNDFWIPDAAAVQDWEDYLQALRKQHDSVGAVVEVVARGVPAGIGAPIYGKLDTDLAAAMMSINAVKAVEIGEGMNAALLKGSENADEIFMGNDGAPVYSSNHAGGILGGISTGQDVVIRFAVKPTSSILTPRQSIRKDGTAAEVITKGRHDPCVGIRAVPVAEAMMAFVILDHILLHRGQIGENQGVIGAPD</sequence>
<reference key="1">
    <citation type="submission" date="2006-05" db="EMBL/GenBank/DDBJ databases">
        <title>Complete sequence of chromosome of Silicibacter sp. TM1040.</title>
        <authorList>
            <consortium name="US DOE Joint Genome Institute"/>
            <person name="Copeland A."/>
            <person name="Lucas S."/>
            <person name="Lapidus A."/>
            <person name="Barry K."/>
            <person name="Detter J.C."/>
            <person name="Glavina del Rio T."/>
            <person name="Hammon N."/>
            <person name="Israni S."/>
            <person name="Dalin E."/>
            <person name="Tice H."/>
            <person name="Pitluck S."/>
            <person name="Brettin T."/>
            <person name="Bruce D."/>
            <person name="Han C."/>
            <person name="Tapia R."/>
            <person name="Goodwin L."/>
            <person name="Thompson L.S."/>
            <person name="Gilna P."/>
            <person name="Schmutz J."/>
            <person name="Larimer F."/>
            <person name="Land M."/>
            <person name="Hauser L."/>
            <person name="Kyrpides N."/>
            <person name="Kim E."/>
            <person name="Belas R."/>
            <person name="Moran M.A."/>
            <person name="Buchan A."/>
            <person name="Gonzalez J.M."/>
            <person name="Schell M.A."/>
            <person name="Sun F."/>
            <person name="Richardson P."/>
        </authorList>
    </citation>
    <scope>NUCLEOTIDE SEQUENCE [LARGE SCALE GENOMIC DNA]</scope>
    <source>
        <strain>TM1040</strain>
    </source>
</reference>
<name>AROC_RUEST</name>
<proteinExistence type="inferred from homology"/>
<organism>
    <name type="scientific">Ruegeria sp. (strain TM1040)</name>
    <name type="common">Silicibacter sp.</name>
    <dbReference type="NCBI Taxonomy" id="292414"/>
    <lineage>
        <taxon>Bacteria</taxon>
        <taxon>Pseudomonadati</taxon>
        <taxon>Pseudomonadota</taxon>
        <taxon>Alphaproteobacteria</taxon>
        <taxon>Rhodobacterales</taxon>
        <taxon>Roseobacteraceae</taxon>
        <taxon>Ruegeria</taxon>
    </lineage>
</organism>
<evidence type="ECO:0000255" key="1">
    <source>
        <dbReference type="HAMAP-Rule" id="MF_00300"/>
    </source>
</evidence>
<feature type="chain" id="PRO_0000256336" description="Chorismate synthase">
    <location>
        <begin position="1"/>
        <end position="370"/>
    </location>
</feature>
<feature type="binding site" evidence="1">
    <location>
        <position position="48"/>
    </location>
    <ligand>
        <name>NADP(+)</name>
        <dbReference type="ChEBI" id="CHEBI:58349"/>
    </ligand>
</feature>
<feature type="binding site" evidence="1">
    <location>
        <begin position="125"/>
        <end position="127"/>
    </location>
    <ligand>
        <name>FMN</name>
        <dbReference type="ChEBI" id="CHEBI:58210"/>
    </ligand>
</feature>
<feature type="binding site" evidence="1">
    <location>
        <begin position="241"/>
        <end position="242"/>
    </location>
    <ligand>
        <name>FMN</name>
        <dbReference type="ChEBI" id="CHEBI:58210"/>
    </ligand>
</feature>
<feature type="binding site" evidence="1">
    <location>
        <position position="286"/>
    </location>
    <ligand>
        <name>FMN</name>
        <dbReference type="ChEBI" id="CHEBI:58210"/>
    </ligand>
</feature>
<feature type="binding site" evidence="1">
    <location>
        <begin position="301"/>
        <end position="305"/>
    </location>
    <ligand>
        <name>FMN</name>
        <dbReference type="ChEBI" id="CHEBI:58210"/>
    </ligand>
</feature>
<feature type="binding site" evidence="1">
    <location>
        <position position="327"/>
    </location>
    <ligand>
        <name>FMN</name>
        <dbReference type="ChEBI" id="CHEBI:58210"/>
    </ligand>
</feature>
<comment type="function">
    <text evidence="1">Catalyzes the anti-1,4-elimination of the C-3 phosphate and the C-6 proR hydrogen from 5-enolpyruvylshikimate-3-phosphate (EPSP) to yield chorismate, which is the branch point compound that serves as the starting substrate for the three terminal pathways of aromatic amino acid biosynthesis. This reaction introduces a second double bond into the aromatic ring system.</text>
</comment>
<comment type="catalytic activity">
    <reaction evidence="1">
        <text>5-O-(1-carboxyvinyl)-3-phosphoshikimate = chorismate + phosphate</text>
        <dbReference type="Rhea" id="RHEA:21020"/>
        <dbReference type="ChEBI" id="CHEBI:29748"/>
        <dbReference type="ChEBI" id="CHEBI:43474"/>
        <dbReference type="ChEBI" id="CHEBI:57701"/>
        <dbReference type="EC" id="4.2.3.5"/>
    </reaction>
</comment>
<comment type="cofactor">
    <cofactor evidence="1">
        <name>FMNH2</name>
        <dbReference type="ChEBI" id="CHEBI:57618"/>
    </cofactor>
    <text evidence="1">Reduced FMN (FMNH(2)).</text>
</comment>
<comment type="pathway">
    <text evidence="1">Metabolic intermediate biosynthesis; chorismate biosynthesis; chorismate from D-erythrose 4-phosphate and phosphoenolpyruvate: step 7/7.</text>
</comment>
<comment type="subunit">
    <text evidence="1">Homotetramer.</text>
</comment>
<comment type="similarity">
    <text evidence="1">Belongs to the chorismate synthase family.</text>
</comment>
<protein>
    <recommendedName>
        <fullName evidence="1">Chorismate synthase</fullName>
        <shortName evidence="1">CS</shortName>
        <ecNumber evidence="1">4.2.3.5</ecNumber>
    </recommendedName>
    <alternativeName>
        <fullName evidence="1">5-enolpyruvylshikimate-3-phosphate phospholyase</fullName>
    </alternativeName>
</protein>
<accession>Q1GCR5</accession>
<gene>
    <name evidence="1" type="primary">aroC</name>
    <name type="ordered locus">TM1040_2819</name>
</gene>